<organism>
    <name type="scientific">Afipia carboxidovorans (strain ATCC 49405 / DSM 1227 / KCTC 32145 / OM5)</name>
    <name type="common">Oligotropha carboxidovorans</name>
    <dbReference type="NCBI Taxonomy" id="504832"/>
    <lineage>
        <taxon>Bacteria</taxon>
        <taxon>Pseudomonadati</taxon>
        <taxon>Pseudomonadota</taxon>
        <taxon>Alphaproteobacteria</taxon>
        <taxon>Hyphomicrobiales</taxon>
        <taxon>Nitrobacteraceae</taxon>
        <taxon>Afipia</taxon>
    </lineage>
</organism>
<name>RF1_AFIC5</name>
<reference key="1">
    <citation type="journal article" date="2008" name="J. Bacteriol.">
        <title>Genome sequence of the chemolithoautotrophic bacterium Oligotropha carboxidovorans OM5T.</title>
        <authorList>
            <person name="Paul D."/>
            <person name="Bridges S."/>
            <person name="Burgess S.C."/>
            <person name="Dandass Y."/>
            <person name="Lawrence M.L."/>
        </authorList>
    </citation>
    <scope>NUCLEOTIDE SEQUENCE [LARGE SCALE GENOMIC DNA]</scope>
    <source>
        <strain>ATCC 49405 / DSM 1227 / KCTC 32145 / OM5</strain>
    </source>
</reference>
<reference key="2">
    <citation type="journal article" date="2011" name="J. Bacteriol.">
        <title>Complete genome sequences of the chemolithoautotrophic Oligotropha carboxidovorans strains OM4 and OM5.</title>
        <authorList>
            <person name="Volland S."/>
            <person name="Rachinger M."/>
            <person name="Strittmatter A."/>
            <person name="Daniel R."/>
            <person name="Gottschalk G."/>
            <person name="Meyer O."/>
        </authorList>
    </citation>
    <scope>NUCLEOTIDE SEQUENCE [LARGE SCALE GENOMIC DNA]</scope>
    <source>
        <strain>ATCC 49405 / DSM 1227 / KCTC 32145 / OM5</strain>
    </source>
</reference>
<keyword id="KW-0963">Cytoplasm</keyword>
<keyword id="KW-0488">Methylation</keyword>
<keyword id="KW-0648">Protein biosynthesis</keyword>
<keyword id="KW-1185">Reference proteome</keyword>
<accession>B6JA06</accession>
<accession>F8BV77</accession>
<feature type="chain" id="PRO_1000093481" description="Peptide chain release factor 1">
    <location>
        <begin position="1"/>
        <end position="358"/>
    </location>
</feature>
<feature type="region of interest" description="Disordered" evidence="2">
    <location>
        <begin position="282"/>
        <end position="308"/>
    </location>
</feature>
<feature type="compositionally biased region" description="Basic and acidic residues" evidence="2">
    <location>
        <begin position="282"/>
        <end position="306"/>
    </location>
</feature>
<feature type="modified residue" description="N5-methylglutamine" evidence="1">
    <location>
        <position position="233"/>
    </location>
</feature>
<protein>
    <recommendedName>
        <fullName evidence="1">Peptide chain release factor 1</fullName>
        <shortName evidence="1">RF-1</shortName>
    </recommendedName>
</protein>
<evidence type="ECO:0000255" key="1">
    <source>
        <dbReference type="HAMAP-Rule" id="MF_00093"/>
    </source>
</evidence>
<evidence type="ECO:0000256" key="2">
    <source>
        <dbReference type="SAM" id="MobiDB-lite"/>
    </source>
</evidence>
<sequence length="358" mass="39300">MLPDAKLDILLARHAALEAELLGQLNAEAYVRATRELAELTPVVDAVKAYRAGASELSDLDAMIDDPTTDAEMRAMAESERPVLQERQENLEQQIRIALLPKDAMDERNVVLEVRAGTGGDEASLFAGDLFRMYERFAALQGWKVEVISASEGTVGGYKEIVAQVQGRGAFAKLKFESGVHRVQRVPDTEASGRIHTSAATVAVLPEAEEIDIDIKDTDLRIETMRAQGAGGQHVNKTESAIRITHIPTGIVVMMQDSRSQHKNRASAMNILRSRILDAERQRAASERSADRRGQVGSGDRSERVRTYNFPQGRVTDHRINLTLYKLPQVIAGEALNELIDALTTEHQAALLATETSA</sequence>
<gene>
    <name evidence="1" type="primary">prfA</name>
    <name type="ordered locus">OCAR_4098</name>
    <name type="ordered locus">OCA5_c04120</name>
</gene>
<proteinExistence type="inferred from homology"/>
<comment type="function">
    <text evidence="1">Peptide chain release factor 1 directs the termination of translation in response to the peptide chain termination codons UAG and UAA.</text>
</comment>
<comment type="subcellular location">
    <subcellularLocation>
        <location evidence="1">Cytoplasm</location>
    </subcellularLocation>
</comment>
<comment type="PTM">
    <text evidence="1">Methylated by PrmC. Methylation increases the termination efficiency of RF1.</text>
</comment>
<comment type="similarity">
    <text evidence="1">Belongs to the prokaryotic/mitochondrial release factor family.</text>
</comment>
<dbReference type="EMBL" id="CP001196">
    <property type="protein sequence ID" value="ACI91249.1"/>
    <property type="molecule type" value="Genomic_DNA"/>
</dbReference>
<dbReference type="EMBL" id="CP002826">
    <property type="protein sequence ID" value="AEI05137.1"/>
    <property type="molecule type" value="Genomic_DNA"/>
</dbReference>
<dbReference type="RefSeq" id="WP_012561281.1">
    <property type="nucleotide sequence ID" value="NC_015684.1"/>
</dbReference>
<dbReference type="SMR" id="B6JA06"/>
<dbReference type="STRING" id="504832.OCA5_c04120"/>
<dbReference type="KEGG" id="oca:OCAR_4098"/>
<dbReference type="KEGG" id="ocg:OCA5_c04120"/>
<dbReference type="PATRIC" id="fig|504832.7.peg.432"/>
<dbReference type="eggNOG" id="COG0216">
    <property type="taxonomic scope" value="Bacteria"/>
</dbReference>
<dbReference type="HOGENOM" id="CLU_036856_0_1_5"/>
<dbReference type="OrthoDB" id="9806673at2"/>
<dbReference type="Proteomes" id="UP000007730">
    <property type="component" value="Chromosome"/>
</dbReference>
<dbReference type="GO" id="GO:0005737">
    <property type="term" value="C:cytoplasm"/>
    <property type="evidence" value="ECO:0007669"/>
    <property type="project" value="UniProtKB-SubCell"/>
</dbReference>
<dbReference type="GO" id="GO:0016149">
    <property type="term" value="F:translation release factor activity, codon specific"/>
    <property type="evidence" value="ECO:0007669"/>
    <property type="project" value="UniProtKB-UniRule"/>
</dbReference>
<dbReference type="FunFam" id="3.30.160.20:FF:000004">
    <property type="entry name" value="Peptide chain release factor 1"/>
    <property type="match status" value="1"/>
</dbReference>
<dbReference type="FunFam" id="3.30.70.1660:FF:000002">
    <property type="entry name" value="Peptide chain release factor 1"/>
    <property type="match status" value="1"/>
</dbReference>
<dbReference type="FunFam" id="3.30.70.1660:FF:000004">
    <property type="entry name" value="Peptide chain release factor 1"/>
    <property type="match status" value="1"/>
</dbReference>
<dbReference type="Gene3D" id="3.30.160.20">
    <property type="match status" value="1"/>
</dbReference>
<dbReference type="Gene3D" id="3.30.70.1660">
    <property type="match status" value="2"/>
</dbReference>
<dbReference type="Gene3D" id="6.10.140.1950">
    <property type="match status" value="1"/>
</dbReference>
<dbReference type="HAMAP" id="MF_00093">
    <property type="entry name" value="Rel_fac_1"/>
    <property type="match status" value="1"/>
</dbReference>
<dbReference type="InterPro" id="IPR005139">
    <property type="entry name" value="PCRF"/>
</dbReference>
<dbReference type="InterPro" id="IPR000352">
    <property type="entry name" value="Pep_chain_release_fac_I"/>
</dbReference>
<dbReference type="InterPro" id="IPR045853">
    <property type="entry name" value="Pep_chain_release_fac_I_sf"/>
</dbReference>
<dbReference type="InterPro" id="IPR050057">
    <property type="entry name" value="Prokaryotic/Mito_RF"/>
</dbReference>
<dbReference type="InterPro" id="IPR004373">
    <property type="entry name" value="RF-1"/>
</dbReference>
<dbReference type="NCBIfam" id="TIGR00019">
    <property type="entry name" value="prfA"/>
    <property type="match status" value="1"/>
</dbReference>
<dbReference type="NCBIfam" id="NF001859">
    <property type="entry name" value="PRK00591.1"/>
    <property type="match status" value="1"/>
</dbReference>
<dbReference type="PANTHER" id="PTHR43804">
    <property type="entry name" value="LD18447P"/>
    <property type="match status" value="1"/>
</dbReference>
<dbReference type="PANTHER" id="PTHR43804:SF7">
    <property type="entry name" value="LD18447P"/>
    <property type="match status" value="1"/>
</dbReference>
<dbReference type="Pfam" id="PF03462">
    <property type="entry name" value="PCRF"/>
    <property type="match status" value="1"/>
</dbReference>
<dbReference type="Pfam" id="PF00472">
    <property type="entry name" value="RF-1"/>
    <property type="match status" value="1"/>
</dbReference>
<dbReference type="SMART" id="SM00937">
    <property type="entry name" value="PCRF"/>
    <property type="match status" value="1"/>
</dbReference>
<dbReference type="SUPFAM" id="SSF75620">
    <property type="entry name" value="Release factor"/>
    <property type="match status" value="1"/>
</dbReference>
<dbReference type="PROSITE" id="PS00745">
    <property type="entry name" value="RF_PROK_I"/>
    <property type="match status" value="1"/>
</dbReference>